<proteinExistence type="inferred from homology"/>
<reference key="1">
    <citation type="journal article" date="2008" name="J. Bacteriol.">
        <title>Genome sequence of Lactobacillus helveticus: an organism distinguished by selective gene loss and IS element expansion.</title>
        <authorList>
            <person name="Callanan M."/>
            <person name="Kaleta P."/>
            <person name="O'Callaghan J."/>
            <person name="O'Sullivan O."/>
            <person name="Jordan K."/>
            <person name="McAuliffe O."/>
            <person name="Sangrador-Vegas A."/>
            <person name="Slattery L."/>
            <person name="Fitzgerald G.F."/>
            <person name="Beresford T."/>
            <person name="Ross R.P."/>
        </authorList>
    </citation>
    <scope>NUCLEOTIDE SEQUENCE [LARGE SCALE GENOMIC DNA]</scope>
    <source>
        <strain>DPC 4571</strain>
    </source>
</reference>
<organism>
    <name type="scientific">Lactobacillus helveticus (strain DPC 4571)</name>
    <dbReference type="NCBI Taxonomy" id="405566"/>
    <lineage>
        <taxon>Bacteria</taxon>
        <taxon>Bacillati</taxon>
        <taxon>Bacillota</taxon>
        <taxon>Bacilli</taxon>
        <taxon>Lactobacillales</taxon>
        <taxon>Lactobacillaceae</taxon>
        <taxon>Lactobacillus</taxon>
    </lineage>
</organism>
<dbReference type="EC" id="6.1.1.20" evidence="1"/>
<dbReference type="EMBL" id="CP000517">
    <property type="protein sequence ID" value="ABX27503.1"/>
    <property type="molecule type" value="Genomic_DNA"/>
</dbReference>
<dbReference type="RefSeq" id="WP_012212111.1">
    <property type="nucleotide sequence ID" value="NC_010080.1"/>
</dbReference>
<dbReference type="SMR" id="A8YWB7"/>
<dbReference type="KEGG" id="lhe:lhv_1581"/>
<dbReference type="eggNOG" id="COG0016">
    <property type="taxonomic scope" value="Bacteria"/>
</dbReference>
<dbReference type="HOGENOM" id="CLU_025086_0_1_9"/>
<dbReference type="Proteomes" id="UP000000790">
    <property type="component" value="Chromosome"/>
</dbReference>
<dbReference type="GO" id="GO:0005737">
    <property type="term" value="C:cytoplasm"/>
    <property type="evidence" value="ECO:0007669"/>
    <property type="project" value="UniProtKB-SubCell"/>
</dbReference>
<dbReference type="GO" id="GO:0005524">
    <property type="term" value="F:ATP binding"/>
    <property type="evidence" value="ECO:0007669"/>
    <property type="project" value="UniProtKB-UniRule"/>
</dbReference>
<dbReference type="GO" id="GO:0140096">
    <property type="term" value="F:catalytic activity, acting on a protein"/>
    <property type="evidence" value="ECO:0007669"/>
    <property type="project" value="UniProtKB-ARBA"/>
</dbReference>
<dbReference type="GO" id="GO:0000287">
    <property type="term" value="F:magnesium ion binding"/>
    <property type="evidence" value="ECO:0007669"/>
    <property type="project" value="UniProtKB-UniRule"/>
</dbReference>
<dbReference type="GO" id="GO:0004826">
    <property type="term" value="F:phenylalanine-tRNA ligase activity"/>
    <property type="evidence" value="ECO:0007669"/>
    <property type="project" value="UniProtKB-UniRule"/>
</dbReference>
<dbReference type="GO" id="GO:0016740">
    <property type="term" value="F:transferase activity"/>
    <property type="evidence" value="ECO:0007669"/>
    <property type="project" value="UniProtKB-ARBA"/>
</dbReference>
<dbReference type="GO" id="GO:0000049">
    <property type="term" value="F:tRNA binding"/>
    <property type="evidence" value="ECO:0007669"/>
    <property type="project" value="InterPro"/>
</dbReference>
<dbReference type="GO" id="GO:0006432">
    <property type="term" value="P:phenylalanyl-tRNA aminoacylation"/>
    <property type="evidence" value="ECO:0007669"/>
    <property type="project" value="UniProtKB-UniRule"/>
</dbReference>
<dbReference type="CDD" id="cd00496">
    <property type="entry name" value="PheRS_alpha_core"/>
    <property type="match status" value="1"/>
</dbReference>
<dbReference type="FunFam" id="3.30.930.10:FF:000003">
    <property type="entry name" value="Phenylalanine--tRNA ligase alpha subunit"/>
    <property type="match status" value="1"/>
</dbReference>
<dbReference type="Gene3D" id="3.30.930.10">
    <property type="entry name" value="Bira Bifunctional Protein, Domain 2"/>
    <property type="match status" value="1"/>
</dbReference>
<dbReference type="HAMAP" id="MF_00281">
    <property type="entry name" value="Phe_tRNA_synth_alpha1"/>
    <property type="match status" value="1"/>
</dbReference>
<dbReference type="InterPro" id="IPR006195">
    <property type="entry name" value="aa-tRNA-synth_II"/>
</dbReference>
<dbReference type="InterPro" id="IPR045864">
    <property type="entry name" value="aa-tRNA-synth_II/BPL/LPL"/>
</dbReference>
<dbReference type="InterPro" id="IPR004529">
    <property type="entry name" value="Phe-tRNA-synth_IIc_asu"/>
</dbReference>
<dbReference type="InterPro" id="IPR004188">
    <property type="entry name" value="Phe-tRNA_ligase_II_N"/>
</dbReference>
<dbReference type="InterPro" id="IPR022911">
    <property type="entry name" value="Phe_tRNA_ligase_alpha1_bac"/>
</dbReference>
<dbReference type="InterPro" id="IPR002319">
    <property type="entry name" value="Phenylalanyl-tRNA_Synthase"/>
</dbReference>
<dbReference type="InterPro" id="IPR010978">
    <property type="entry name" value="tRNA-bd_arm"/>
</dbReference>
<dbReference type="NCBIfam" id="TIGR00468">
    <property type="entry name" value="pheS"/>
    <property type="match status" value="1"/>
</dbReference>
<dbReference type="PANTHER" id="PTHR11538:SF41">
    <property type="entry name" value="PHENYLALANINE--TRNA LIGASE, MITOCHONDRIAL"/>
    <property type="match status" value="1"/>
</dbReference>
<dbReference type="PANTHER" id="PTHR11538">
    <property type="entry name" value="PHENYLALANYL-TRNA SYNTHETASE"/>
    <property type="match status" value="1"/>
</dbReference>
<dbReference type="Pfam" id="PF02912">
    <property type="entry name" value="Phe_tRNA-synt_N"/>
    <property type="match status" value="1"/>
</dbReference>
<dbReference type="Pfam" id="PF01409">
    <property type="entry name" value="tRNA-synt_2d"/>
    <property type="match status" value="1"/>
</dbReference>
<dbReference type="SUPFAM" id="SSF55681">
    <property type="entry name" value="Class II aaRS and biotin synthetases"/>
    <property type="match status" value="1"/>
</dbReference>
<dbReference type="SUPFAM" id="SSF46589">
    <property type="entry name" value="tRNA-binding arm"/>
    <property type="match status" value="1"/>
</dbReference>
<dbReference type="PROSITE" id="PS50862">
    <property type="entry name" value="AA_TRNA_LIGASE_II"/>
    <property type="match status" value="1"/>
</dbReference>
<comment type="catalytic activity">
    <reaction evidence="1">
        <text>tRNA(Phe) + L-phenylalanine + ATP = L-phenylalanyl-tRNA(Phe) + AMP + diphosphate + H(+)</text>
        <dbReference type="Rhea" id="RHEA:19413"/>
        <dbReference type="Rhea" id="RHEA-COMP:9668"/>
        <dbReference type="Rhea" id="RHEA-COMP:9699"/>
        <dbReference type="ChEBI" id="CHEBI:15378"/>
        <dbReference type="ChEBI" id="CHEBI:30616"/>
        <dbReference type="ChEBI" id="CHEBI:33019"/>
        <dbReference type="ChEBI" id="CHEBI:58095"/>
        <dbReference type="ChEBI" id="CHEBI:78442"/>
        <dbReference type="ChEBI" id="CHEBI:78531"/>
        <dbReference type="ChEBI" id="CHEBI:456215"/>
        <dbReference type="EC" id="6.1.1.20"/>
    </reaction>
</comment>
<comment type="cofactor">
    <cofactor evidence="1">
        <name>Mg(2+)</name>
        <dbReference type="ChEBI" id="CHEBI:18420"/>
    </cofactor>
    <text evidence="1">Binds 2 magnesium ions per tetramer.</text>
</comment>
<comment type="subunit">
    <text evidence="1">Tetramer of two alpha and two beta subunits.</text>
</comment>
<comment type="subcellular location">
    <subcellularLocation>
        <location evidence="1">Cytoplasm</location>
    </subcellularLocation>
</comment>
<comment type="similarity">
    <text evidence="1">Belongs to the class-II aminoacyl-tRNA synthetase family. Phe-tRNA synthetase alpha subunit type 1 subfamily.</text>
</comment>
<sequence length="349" mass="39712">MDLFDKLKELHEQGLAEIKKATDEQTLNKIRVELVGRKGELTKILHSMRDVAPENRREVGQKVNELRDLFNKQLDTTKAKIVKAVLAKKLEDEKIDVTLPGREGHLGSKHPINIILDDLESYFIGMGYKVVQGPEIETDHYCFEMMNLPKDHPARDMQATFYIDGEDLLRTQTSGDQARVLEKHDFSKSPLKMVGPGKVYRRDDDDATHSHQFMQMEGLVVDKNVTMSDLKGTLEMIAKHVFGQDRATRLRPSYFPFTEPSVEMDVSCFNCDGKGCPICKYTGWIEVLGAGMVHPNVLENAGVDSTVYGGFAFGLGLDRFAILKYGIDDIRDFYTNDVRFLKQFRKEEN</sequence>
<evidence type="ECO:0000255" key="1">
    <source>
        <dbReference type="HAMAP-Rule" id="MF_00281"/>
    </source>
</evidence>
<feature type="chain" id="PRO_1000071935" description="Phenylalanine--tRNA ligase alpha subunit">
    <location>
        <begin position="1"/>
        <end position="349"/>
    </location>
</feature>
<feature type="binding site" evidence="1">
    <location>
        <position position="259"/>
    </location>
    <ligand>
        <name>Mg(2+)</name>
        <dbReference type="ChEBI" id="CHEBI:18420"/>
        <note>shared with beta subunit</note>
    </ligand>
</feature>
<gene>
    <name evidence="1" type="primary">pheS</name>
    <name type="ordered locus">lhv_1581</name>
</gene>
<accession>A8YWB7</accession>
<name>SYFA_LACH4</name>
<protein>
    <recommendedName>
        <fullName evidence="1">Phenylalanine--tRNA ligase alpha subunit</fullName>
        <ecNumber evidence="1">6.1.1.20</ecNumber>
    </recommendedName>
    <alternativeName>
        <fullName evidence="1">Phenylalanyl-tRNA synthetase alpha subunit</fullName>
        <shortName evidence="1">PheRS</shortName>
    </alternativeName>
</protein>
<keyword id="KW-0030">Aminoacyl-tRNA synthetase</keyword>
<keyword id="KW-0067">ATP-binding</keyword>
<keyword id="KW-0963">Cytoplasm</keyword>
<keyword id="KW-0436">Ligase</keyword>
<keyword id="KW-0460">Magnesium</keyword>
<keyword id="KW-0479">Metal-binding</keyword>
<keyword id="KW-0547">Nucleotide-binding</keyword>
<keyword id="KW-0648">Protein biosynthesis</keyword>